<comment type="function">
    <text evidence="2">Mitochondrial outer membrane protein which regulates mitochondrial organization (By similarity). It is required for mitochondrial fission and promotes the recruitment and association of the fission mediator dynamin-related protein 1 (DNM1L) to the mitochondrial surface independently of the mitochondrial fission FIS1 and MFF proteins (By similarity). Regulates DNM1L GTPase activity (By similarity).</text>
</comment>
<comment type="subunit">
    <text evidence="1">Interacts with DNM1L.</text>
</comment>
<comment type="subcellular location">
    <subcellularLocation>
        <location>Mitochondrion outer membrane</location>
        <topology>Single-pass membrane protein</topology>
    </subcellularLocation>
    <text evidence="1">Colocalizes with DNM1L at mitochondrial membrane. Forms foci and rings around mitochondria (By similarity).</text>
</comment>
<comment type="miscellaneous">
    <text evidence="1">Does not bind ADP or other nucleotides, in contrast to MIEF1.</text>
</comment>
<comment type="similarity">
    <text evidence="5">Belongs to the MID49/MID51 family.</text>
</comment>
<reference key="1">
    <citation type="submission" date="2004-11" db="EMBL/GenBank/DDBJ databases">
        <authorList>
            <consortium name="The German cDNA consortium"/>
        </authorList>
    </citation>
    <scope>NUCLEOTIDE SEQUENCE [LARGE SCALE MRNA]</scope>
    <source>
        <tissue>Brain cortex</tissue>
        <tissue>Kidney</tissue>
    </source>
</reference>
<proteinExistence type="evidence at transcript level"/>
<sequence>MAEFSQKRGKRRGDEGLGSMVDFLLANARLVLGVGGAAVLGIATLAVKRFIDRATSPRDEDDTKADSWKELSLLKATPHLQPRPPPAALSQPVLPLAPSSSAPEGPAKSDPEVTPQLSSPAPLCLTLQERLLAFERDRVTIPAAQVALAKQLAGDIALELQAYFQSKFPELPFGAFVPGGPLYDGLQAGAADHVRLLVPLVLEPGLWSLVPGVDTVARDPRCWAVRRTQLEFCPRGSSPWDRFLVGGYLSSRVLLELLRKVLAASVNWPAIGSLLGCLIRPSMASEELLLEVQHERLELTVAVLVAVPGVDADDRLLLAWPLEGLAGNLWLQDLYPVEAARLRALDDRDAGTRRRLLLLLCAVCRGCSALGQLGRGHLTQVVLRLGEDNVDWTEEALGERFLQALELLIGSLEQASLPCHFNPSVNLFSNLREEEIDDIGYALYSGLQEPEGLL</sequence>
<dbReference type="EMBL" id="CR858474">
    <property type="protein sequence ID" value="CAH90702.1"/>
    <property type="molecule type" value="mRNA"/>
</dbReference>
<dbReference type="EMBL" id="CR859143">
    <property type="protein sequence ID" value="CAH91334.1"/>
    <property type="molecule type" value="mRNA"/>
</dbReference>
<dbReference type="RefSeq" id="NP_001125789.1">
    <property type="nucleotide sequence ID" value="NM_001132317.1"/>
</dbReference>
<dbReference type="SMR" id="Q5RA76"/>
<dbReference type="FunCoup" id="Q5RA76">
    <property type="interactions" value="134"/>
</dbReference>
<dbReference type="STRING" id="9601.ENSPPYP00000009052"/>
<dbReference type="GeneID" id="100172717"/>
<dbReference type="KEGG" id="pon:100172717"/>
<dbReference type="CTD" id="125170"/>
<dbReference type="eggNOG" id="ENOG502QPJX">
    <property type="taxonomic scope" value="Eukaryota"/>
</dbReference>
<dbReference type="InParanoid" id="Q5RA76"/>
<dbReference type="OrthoDB" id="5964386at2759"/>
<dbReference type="Proteomes" id="UP000001595">
    <property type="component" value="Unplaced"/>
</dbReference>
<dbReference type="GO" id="GO:0005741">
    <property type="term" value="C:mitochondrial outer membrane"/>
    <property type="evidence" value="ECO:0000250"/>
    <property type="project" value="UniProtKB"/>
</dbReference>
<dbReference type="GO" id="GO:0005739">
    <property type="term" value="C:mitochondrion"/>
    <property type="evidence" value="ECO:0000250"/>
    <property type="project" value="UniProtKB"/>
</dbReference>
<dbReference type="GO" id="GO:0007005">
    <property type="term" value="P:mitochondrion organization"/>
    <property type="evidence" value="ECO:0000250"/>
    <property type="project" value="UniProtKB"/>
</dbReference>
<dbReference type="GO" id="GO:0090141">
    <property type="term" value="P:positive regulation of mitochondrial fission"/>
    <property type="evidence" value="ECO:0000250"/>
    <property type="project" value="UniProtKB"/>
</dbReference>
<dbReference type="GO" id="GO:0090314">
    <property type="term" value="P:positive regulation of protein targeting to membrane"/>
    <property type="evidence" value="ECO:0000250"/>
    <property type="project" value="UniProtKB"/>
</dbReference>
<dbReference type="GO" id="GO:0010821">
    <property type="term" value="P:regulation of mitochondrion organization"/>
    <property type="evidence" value="ECO:0000250"/>
    <property type="project" value="UniProtKB"/>
</dbReference>
<dbReference type="FunFam" id="1.10.1410.40:FF:000003">
    <property type="entry name" value="Mitochondrial dynamics protein MID51"/>
    <property type="match status" value="1"/>
</dbReference>
<dbReference type="FunFam" id="3.30.460.90:FF:000004">
    <property type="entry name" value="Mitochondrial elongation factor 2"/>
    <property type="match status" value="1"/>
</dbReference>
<dbReference type="Gene3D" id="1.10.1410.40">
    <property type="match status" value="1"/>
</dbReference>
<dbReference type="Gene3D" id="3.30.460.90">
    <property type="match status" value="1"/>
</dbReference>
<dbReference type="InterPro" id="IPR046906">
    <property type="entry name" value="Mab-21_HhH/H2TH-like"/>
</dbReference>
<dbReference type="InterPro" id="IPR024810">
    <property type="entry name" value="MAB21L/cGLR"/>
</dbReference>
<dbReference type="InterPro" id="IPR045909">
    <property type="entry name" value="MID49/MID51"/>
</dbReference>
<dbReference type="InterPro" id="IPR049097">
    <property type="entry name" value="MID51-like_C"/>
</dbReference>
<dbReference type="PANTHER" id="PTHR16451:SF11">
    <property type="entry name" value="MITOCHONDRIAL DYNAMICS PROTEIN MID49"/>
    <property type="match status" value="1"/>
</dbReference>
<dbReference type="PANTHER" id="PTHR16451">
    <property type="entry name" value="MITOCHONDRIAL DYNAMICS PROTEINS 49/51 FAMILY MEMBER"/>
    <property type="match status" value="1"/>
</dbReference>
<dbReference type="Pfam" id="PF20266">
    <property type="entry name" value="Mab-21_C"/>
    <property type="match status" value="1"/>
</dbReference>
<dbReference type="Pfam" id="PF21297">
    <property type="entry name" value="MID51-like_C"/>
    <property type="match status" value="1"/>
</dbReference>
<dbReference type="SMART" id="SM01265">
    <property type="entry name" value="Mab-21"/>
    <property type="match status" value="1"/>
</dbReference>
<gene>
    <name type="primary">MIEF2</name>
    <name type="synonym">MID49</name>
    <name type="synonym">SMCR7</name>
</gene>
<feature type="chain" id="PRO_0000310447" description="Mitochondrial dynamics protein MID49">
    <location>
        <begin position="1"/>
        <end position="454"/>
    </location>
</feature>
<feature type="topological domain" description="Mitochondrial intermembrane" evidence="3">
    <location>
        <begin position="1"/>
        <end position="22"/>
    </location>
</feature>
<feature type="transmembrane region" description="Helical" evidence="3">
    <location>
        <begin position="23"/>
        <end position="43"/>
    </location>
</feature>
<feature type="topological domain" description="Cytoplasmic" evidence="3">
    <location>
        <begin position="44"/>
        <end position="454"/>
    </location>
</feature>
<feature type="region of interest" description="Disordered" evidence="4">
    <location>
        <begin position="76"/>
        <end position="119"/>
    </location>
</feature>
<feature type="compositionally biased region" description="Low complexity" evidence="4">
    <location>
        <begin position="88"/>
        <end position="108"/>
    </location>
</feature>
<feature type="sequence conflict" description="In Ref. 1; CAH90702." evidence="5" ref="1">
    <original>L</original>
    <variation>Q</variation>
    <location>
        <position position="197"/>
    </location>
</feature>
<feature type="sequence conflict" description="In Ref. 1; CAH90702." evidence="5" ref="1">
    <original>R</original>
    <variation>H</variation>
    <location>
        <position position="365"/>
    </location>
</feature>
<accession>Q5RA76</accession>
<accession>Q5RC08</accession>
<organism>
    <name type="scientific">Pongo abelii</name>
    <name type="common">Sumatran orangutan</name>
    <name type="synonym">Pongo pygmaeus abelii</name>
    <dbReference type="NCBI Taxonomy" id="9601"/>
    <lineage>
        <taxon>Eukaryota</taxon>
        <taxon>Metazoa</taxon>
        <taxon>Chordata</taxon>
        <taxon>Craniata</taxon>
        <taxon>Vertebrata</taxon>
        <taxon>Euteleostomi</taxon>
        <taxon>Mammalia</taxon>
        <taxon>Eutheria</taxon>
        <taxon>Euarchontoglires</taxon>
        <taxon>Primates</taxon>
        <taxon>Haplorrhini</taxon>
        <taxon>Catarrhini</taxon>
        <taxon>Hominidae</taxon>
        <taxon>Pongo</taxon>
    </lineage>
</organism>
<name>MID49_PONAB</name>
<evidence type="ECO:0000250" key="1"/>
<evidence type="ECO:0000250" key="2">
    <source>
        <dbReference type="UniProtKB" id="Q96C03"/>
    </source>
</evidence>
<evidence type="ECO:0000255" key="3"/>
<evidence type="ECO:0000256" key="4">
    <source>
        <dbReference type="SAM" id="MobiDB-lite"/>
    </source>
</evidence>
<evidence type="ECO:0000305" key="5"/>
<keyword id="KW-0472">Membrane</keyword>
<keyword id="KW-0496">Mitochondrion</keyword>
<keyword id="KW-1000">Mitochondrion outer membrane</keyword>
<keyword id="KW-1185">Reference proteome</keyword>
<keyword id="KW-0812">Transmembrane</keyword>
<keyword id="KW-1133">Transmembrane helix</keyword>
<protein>
    <recommendedName>
        <fullName>Mitochondrial dynamics protein MID49</fullName>
    </recommendedName>
    <alternativeName>
        <fullName>Mitochondrial dynamics protein of 49 kDa homolog</fullName>
    </alternativeName>
    <alternativeName>
        <fullName>Mitochondrial elongation factor 2</fullName>
    </alternativeName>
    <alternativeName>
        <fullName>Smith-Magenis syndrome chromosomal region candidate gene 7 protein homolog</fullName>
    </alternativeName>
</protein>